<name>METXA_HALVD</name>
<gene>
    <name evidence="1 4" type="primary">metXA</name>
    <name evidence="5" type="synonym">metX</name>
    <name evidence="5" type="ordered locus">HVO_2998</name>
    <name evidence="6" type="ORF">C498_18155</name>
</gene>
<proteinExistence type="evidence at protein level"/>
<feature type="chain" id="PRO_0000440284" description="Homoserine O-acetyltransferase">
    <location>
        <begin position="1"/>
        <end position="415"/>
    </location>
</feature>
<feature type="domain" description="AB hydrolase-1" evidence="1">
    <location>
        <begin position="47"/>
        <end position="369"/>
    </location>
</feature>
<feature type="region of interest" description="Disordered" evidence="2">
    <location>
        <begin position="383"/>
        <end position="415"/>
    </location>
</feature>
<feature type="active site" description="Nucleophile" evidence="1">
    <location>
        <position position="155"/>
    </location>
</feature>
<feature type="active site" evidence="1">
    <location>
        <position position="329"/>
    </location>
</feature>
<feature type="active site" evidence="1">
    <location>
        <position position="362"/>
    </location>
</feature>
<feature type="binding site" evidence="1">
    <location>
        <position position="226"/>
    </location>
    <ligand>
        <name>substrate</name>
    </ligand>
</feature>
<feature type="binding site" evidence="1">
    <location>
        <position position="363"/>
    </location>
    <ligand>
        <name>substrate</name>
    </ligand>
</feature>
<sequence>MSRTRTTPGRRVESDVVDIGEHEFESGEILPDLKVAYEAYGEFDGQNAVLVCHGLTGSQHVAGHGTESGVSGQARAWWGDIVGPGKAIDTNDYYVICVNVPGSCYGTSGPASEGPDGEPWGTDFPPVTVHDWTRAQRRLLDHLGVGRLHAVVGGSVGGMNALDWAVQFPDDVERLAVVASAARLDSQCLGIDAVARRAITSDPNWNGGDYYGEERPSPDAGLGLARQLGHLMYLSKDSMERKFGRRSAGRGERGDAFPSDPAASFFPYREVESYLDYQAEKFAERFDANAYLYLTRAMDDFDLSEGYESDAAALAAFEGEALLVSFTGDWHFTTEQSESLAGAFRRGDVPVAHHVVESDHGHDAFLVEPEKVGPPLADFVDEGVAGRAVTDTAPDGGEPDEDEDFAPVHSSLFSR</sequence>
<evidence type="ECO:0000255" key="1">
    <source>
        <dbReference type="HAMAP-Rule" id="MF_00296"/>
    </source>
</evidence>
<evidence type="ECO:0000256" key="2">
    <source>
        <dbReference type="SAM" id="MobiDB-lite"/>
    </source>
</evidence>
<evidence type="ECO:0000269" key="3">
    <source>
    </source>
</evidence>
<evidence type="ECO:0000303" key="4">
    <source>
    </source>
</evidence>
<evidence type="ECO:0000312" key="5">
    <source>
        <dbReference type="EMBL" id="ADE04431.1"/>
    </source>
</evidence>
<evidence type="ECO:0000312" key="6">
    <source>
        <dbReference type="EMBL" id="ELY24604.1"/>
    </source>
</evidence>
<keyword id="KW-0012">Acyltransferase</keyword>
<keyword id="KW-0028">Amino-acid biosynthesis</keyword>
<keyword id="KW-0963">Cytoplasm</keyword>
<keyword id="KW-0486">Methionine biosynthesis</keyword>
<keyword id="KW-1185">Reference proteome</keyword>
<keyword id="KW-0808">Transferase</keyword>
<dbReference type="EC" id="2.3.1.31" evidence="1 3"/>
<dbReference type="EMBL" id="CP001956">
    <property type="protein sequence ID" value="ADE04431.1"/>
    <property type="molecule type" value="Genomic_DNA"/>
</dbReference>
<dbReference type="EMBL" id="AOHU01000104">
    <property type="protein sequence ID" value="ELY24604.1"/>
    <property type="molecule type" value="Genomic_DNA"/>
</dbReference>
<dbReference type="RefSeq" id="WP_004044906.1">
    <property type="nucleotide sequence ID" value="NC_013967.1"/>
</dbReference>
<dbReference type="SMR" id="D4GY94"/>
<dbReference type="STRING" id="309800.HVO_2998"/>
<dbReference type="ESTHER" id="halvd-metxa">
    <property type="family name" value="Homoserine_transacetylase"/>
</dbReference>
<dbReference type="PaxDb" id="309800-C498_18155"/>
<dbReference type="EnsemblBacteria" id="ADE04431">
    <property type="protein sequence ID" value="ADE04431"/>
    <property type="gene ID" value="HVO_2998"/>
</dbReference>
<dbReference type="GeneID" id="8926491"/>
<dbReference type="KEGG" id="hvo:HVO_2998"/>
<dbReference type="PATRIC" id="fig|309800.29.peg.3529"/>
<dbReference type="eggNOG" id="arCOG00627">
    <property type="taxonomic scope" value="Archaea"/>
</dbReference>
<dbReference type="HOGENOM" id="CLU_028760_1_2_2"/>
<dbReference type="OrthoDB" id="295172at2157"/>
<dbReference type="UniPathway" id="UPA00051">
    <property type="reaction ID" value="UER00074"/>
</dbReference>
<dbReference type="Proteomes" id="UP000008243">
    <property type="component" value="Chromosome"/>
</dbReference>
<dbReference type="Proteomes" id="UP000011532">
    <property type="component" value="Unassembled WGS sequence"/>
</dbReference>
<dbReference type="GO" id="GO:0005737">
    <property type="term" value="C:cytoplasm"/>
    <property type="evidence" value="ECO:0007669"/>
    <property type="project" value="UniProtKB-SubCell"/>
</dbReference>
<dbReference type="GO" id="GO:0004414">
    <property type="term" value="F:homoserine O-acetyltransferase activity"/>
    <property type="evidence" value="ECO:0007669"/>
    <property type="project" value="UniProtKB-UniRule"/>
</dbReference>
<dbReference type="GO" id="GO:0009092">
    <property type="term" value="P:homoserine metabolic process"/>
    <property type="evidence" value="ECO:0007669"/>
    <property type="project" value="TreeGrafter"/>
</dbReference>
<dbReference type="GO" id="GO:0009086">
    <property type="term" value="P:methionine biosynthetic process"/>
    <property type="evidence" value="ECO:0007669"/>
    <property type="project" value="UniProtKB-UniRule"/>
</dbReference>
<dbReference type="Gene3D" id="3.40.50.1820">
    <property type="entry name" value="alpha/beta hydrolase"/>
    <property type="match status" value="1"/>
</dbReference>
<dbReference type="HAMAP" id="MF_00296">
    <property type="entry name" value="MetX_acyltransf"/>
    <property type="match status" value="1"/>
</dbReference>
<dbReference type="InterPro" id="IPR000073">
    <property type="entry name" value="AB_hydrolase_1"/>
</dbReference>
<dbReference type="InterPro" id="IPR029058">
    <property type="entry name" value="AB_hydrolase_fold"/>
</dbReference>
<dbReference type="InterPro" id="IPR008220">
    <property type="entry name" value="HAT_MetX-like"/>
</dbReference>
<dbReference type="NCBIfam" id="TIGR01392">
    <property type="entry name" value="homoserO_Ac_trn"/>
    <property type="match status" value="1"/>
</dbReference>
<dbReference type="NCBIfam" id="NF001209">
    <property type="entry name" value="PRK00175.1"/>
    <property type="match status" value="1"/>
</dbReference>
<dbReference type="PANTHER" id="PTHR32268">
    <property type="entry name" value="HOMOSERINE O-ACETYLTRANSFERASE"/>
    <property type="match status" value="1"/>
</dbReference>
<dbReference type="PANTHER" id="PTHR32268:SF11">
    <property type="entry name" value="HOMOSERINE O-ACETYLTRANSFERASE"/>
    <property type="match status" value="1"/>
</dbReference>
<dbReference type="Pfam" id="PF00561">
    <property type="entry name" value="Abhydrolase_1"/>
    <property type="match status" value="1"/>
</dbReference>
<dbReference type="PIRSF" id="PIRSF000443">
    <property type="entry name" value="Homoser_Ac_trans"/>
    <property type="match status" value="1"/>
</dbReference>
<dbReference type="SUPFAM" id="SSF53474">
    <property type="entry name" value="alpha/beta-Hydrolases"/>
    <property type="match status" value="1"/>
</dbReference>
<comment type="function">
    <text evidence="1 3">Transfers an acetyl group from acetyl-CoA to L-homoserine, forming acetyl-L-homoserine.</text>
</comment>
<comment type="catalytic activity">
    <reaction evidence="1 3">
        <text>L-homoserine + acetyl-CoA = O-acetyl-L-homoserine + CoA</text>
        <dbReference type="Rhea" id="RHEA:13701"/>
        <dbReference type="ChEBI" id="CHEBI:57287"/>
        <dbReference type="ChEBI" id="CHEBI:57288"/>
        <dbReference type="ChEBI" id="CHEBI:57476"/>
        <dbReference type="ChEBI" id="CHEBI:57716"/>
        <dbReference type="EC" id="2.3.1.31"/>
    </reaction>
</comment>
<comment type="pathway">
    <text evidence="1">Amino-acid biosynthesis; L-methionine biosynthesis via de novo pathway; O-acetyl-L-homoserine from L-homoserine: step 1/1.</text>
</comment>
<comment type="subunit">
    <text evidence="1">Homodimer.</text>
</comment>
<comment type="subcellular location">
    <subcellularLocation>
        <location evidence="1">Cytoplasm</location>
    </subcellularLocation>
</comment>
<comment type="similarity">
    <text evidence="1">Belongs to the AB hydrolase superfamily. MetX family.</text>
</comment>
<organism>
    <name type="scientific">Haloferax volcanii (strain ATCC 29605 / DSM 3757 / JCM 8879 / NBRC 14742 / NCIMB 2012 / VKM B-1768 / DS2)</name>
    <name type="common">Halobacterium volcanii</name>
    <dbReference type="NCBI Taxonomy" id="309800"/>
    <lineage>
        <taxon>Archaea</taxon>
        <taxon>Methanobacteriati</taxon>
        <taxon>Methanobacteriota</taxon>
        <taxon>Stenosarchaea group</taxon>
        <taxon>Halobacteria</taxon>
        <taxon>Halobacteriales</taxon>
        <taxon>Haloferacaceae</taxon>
        <taxon>Haloferax</taxon>
    </lineage>
</organism>
<reference key="1">
    <citation type="journal article" date="2010" name="PLoS ONE">
        <title>The complete genome sequence of Haloferax volcanii DS2, a model archaeon.</title>
        <authorList>
            <person name="Hartman A.L."/>
            <person name="Norais C."/>
            <person name="Badger J.H."/>
            <person name="Delmas S."/>
            <person name="Haldenby S."/>
            <person name="Madupu R."/>
            <person name="Robinson J."/>
            <person name="Khouri H."/>
            <person name="Ren Q."/>
            <person name="Lowe T.M."/>
            <person name="Maupin-Furlow J."/>
            <person name="Pohlschroder M."/>
            <person name="Daniels C."/>
            <person name="Pfeiffer F."/>
            <person name="Allers T."/>
            <person name="Eisen J.A."/>
        </authorList>
    </citation>
    <scope>NUCLEOTIDE SEQUENCE [LARGE SCALE GENOMIC DNA]</scope>
    <source>
        <strain>ATCC 29605 / DSM 3757 / JCM 8879 / NBRC 14742 / NCIMB 2012 / VKM B-1768 / DS2</strain>
    </source>
</reference>
<reference key="2">
    <citation type="journal article" date="2014" name="PLoS Genet.">
        <title>Phylogenetically driven sequencing of extremely halophilic archaea reveals strategies for static and dynamic osmo-response.</title>
        <authorList>
            <person name="Becker E.A."/>
            <person name="Seitzer P.M."/>
            <person name="Tritt A."/>
            <person name="Larsen D."/>
            <person name="Krusor M."/>
            <person name="Yao A.I."/>
            <person name="Wu D."/>
            <person name="Madern D."/>
            <person name="Eisen J.A."/>
            <person name="Darling A.E."/>
            <person name="Facciotti M.T."/>
        </authorList>
    </citation>
    <scope>NUCLEOTIDE SEQUENCE [LARGE SCALE GENOMIC DNA]</scope>
    <source>
        <strain>ATCC 29605 / DSM 3757 / JCM 8879 / NBRC 14742 / NCIMB 2012 / VKM B-1768 / DS2</strain>
    </source>
</reference>
<reference key="3">
    <citation type="journal article" date="2017" name="Nat. Chem. Biol.">
        <title>Parallel evolution of non-homologous isofunctional enzymes in methionine biosynthesis.</title>
        <authorList>
            <person name="Bastard K."/>
            <person name="Perret A."/>
            <person name="Mariage A."/>
            <person name="Bessonnet T."/>
            <person name="Pinet-Turpault A."/>
            <person name="Petit J.L."/>
            <person name="Darii E."/>
            <person name="Bazire P."/>
            <person name="Vergne-Vaxelaire C."/>
            <person name="Brewee C."/>
            <person name="Debard A."/>
            <person name="Pellouin V."/>
            <person name="Besnard-Gonnet M."/>
            <person name="Artiguenave F."/>
            <person name="Medigue C."/>
            <person name="Vallenet D."/>
            <person name="Danchin A."/>
            <person name="Zaparucha A."/>
            <person name="Weissenbach J."/>
            <person name="Salanoubat M."/>
            <person name="de Berardinis V."/>
        </authorList>
    </citation>
    <scope>FUNCTION</scope>
    <scope>CATALYTIC ACTIVITY</scope>
</reference>
<accession>D4GY94</accession>
<accession>L9UIA0</accession>
<protein>
    <recommendedName>
        <fullName evidence="1">Homoserine O-acetyltransferase</fullName>
        <shortName evidence="1 4">HAT</shortName>
        <ecNumber evidence="1 3">2.3.1.31</ecNumber>
    </recommendedName>
    <alternativeName>
        <fullName evidence="1">Homoserine transacetylase</fullName>
        <shortName evidence="1">HTA</shortName>
    </alternativeName>
</protein>